<reference key="1">
    <citation type="journal article" date="2006" name="J. Bacteriol.">
        <title>Pathogenomic sequence analysis of Bacillus cereus and Bacillus thuringiensis isolates closely related to Bacillus anthracis.</title>
        <authorList>
            <person name="Han C.S."/>
            <person name="Xie G."/>
            <person name="Challacombe J.F."/>
            <person name="Altherr M.R."/>
            <person name="Bhotika S.S."/>
            <person name="Bruce D."/>
            <person name="Campbell C.S."/>
            <person name="Campbell M.L."/>
            <person name="Chen J."/>
            <person name="Chertkov O."/>
            <person name="Cleland C."/>
            <person name="Dimitrijevic M."/>
            <person name="Doggett N.A."/>
            <person name="Fawcett J.J."/>
            <person name="Glavina T."/>
            <person name="Goodwin L.A."/>
            <person name="Hill K.K."/>
            <person name="Hitchcock P."/>
            <person name="Jackson P.J."/>
            <person name="Keim P."/>
            <person name="Kewalramani A.R."/>
            <person name="Longmire J."/>
            <person name="Lucas S."/>
            <person name="Malfatti S."/>
            <person name="McMurry K."/>
            <person name="Meincke L.J."/>
            <person name="Misra M."/>
            <person name="Moseman B.L."/>
            <person name="Mundt M."/>
            <person name="Munk A.C."/>
            <person name="Okinaka R.T."/>
            <person name="Parson-Quintana B."/>
            <person name="Reilly L.P."/>
            <person name="Richardson P."/>
            <person name="Robinson D.L."/>
            <person name="Rubin E."/>
            <person name="Saunders E."/>
            <person name="Tapia R."/>
            <person name="Tesmer J.G."/>
            <person name="Thayer N."/>
            <person name="Thompson L.S."/>
            <person name="Tice H."/>
            <person name="Ticknor L.O."/>
            <person name="Wills P.L."/>
            <person name="Brettin T.S."/>
            <person name="Gilna P."/>
        </authorList>
    </citation>
    <scope>NUCLEOTIDE SEQUENCE [LARGE SCALE GENOMIC DNA]</scope>
    <source>
        <strain>ZK / E33L</strain>
    </source>
</reference>
<proteinExistence type="inferred from homology"/>
<gene>
    <name evidence="1" type="primary">gcvH</name>
    <name type="ordered locus">BCE33L4716</name>
</gene>
<sequence>MSIPNNLRYSEEHEWVKTEGNEVVIGITHFAQNELGDIVFVELPEVGATIEADEPFGSVESVKTVSELYAPVSGKVVAVNEELSDQPELVNESPYEGAWMVKVELSDASQVEKLLTAEKYAEMTNQD</sequence>
<accession>Q631X9</accession>
<protein>
    <recommendedName>
        <fullName evidence="1">Glycine cleavage system H protein</fullName>
    </recommendedName>
    <alternativeName>
        <fullName evidence="1">Octanoyl/lipoyl carrier protein</fullName>
    </alternativeName>
</protein>
<evidence type="ECO:0000255" key="1">
    <source>
        <dbReference type="HAMAP-Rule" id="MF_00272"/>
    </source>
</evidence>
<evidence type="ECO:0000255" key="2">
    <source>
        <dbReference type="PROSITE-ProRule" id="PRU01066"/>
    </source>
</evidence>
<name>GCSH_BACCZ</name>
<dbReference type="EMBL" id="CP000001">
    <property type="protein sequence ID" value="AAU15562.1"/>
    <property type="molecule type" value="Genomic_DNA"/>
</dbReference>
<dbReference type="RefSeq" id="WP_000026899.1">
    <property type="nucleotide sequence ID" value="NZ_CP009968.1"/>
</dbReference>
<dbReference type="SMR" id="Q631X9"/>
<dbReference type="GeneID" id="45024848"/>
<dbReference type="KEGG" id="bcz:BCE33L4716"/>
<dbReference type="PATRIC" id="fig|288681.22.peg.643"/>
<dbReference type="Proteomes" id="UP000002612">
    <property type="component" value="Chromosome"/>
</dbReference>
<dbReference type="GO" id="GO:0005829">
    <property type="term" value="C:cytosol"/>
    <property type="evidence" value="ECO:0007669"/>
    <property type="project" value="TreeGrafter"/>
</dbReference>
<dbReference type="GO" id="GO:0005960">
    <property type="term" value="C:glycine cleavage complex"/>
    <property type="evidence" value="ECO:0007669"/>
    <property type="project" value="InterPro"/>
</dbReference>
<dbReference type="GO" id="GO:0019464">
    <property type="term" value="P:glycine decarboxylation via glycine cleavage system"/>
    <property type="evidence" value="ECO:0007669"/>
    <property type="project" value="UniProtKB-UniRule"/>
</dbReference>
<dbReference type="CDD" id="cd06848">
    <property type="entry name" value="GCS_H"/>
    <property type="match status" value="1"/>
</dbReference>
<dbReference type="Gene3D" id="2.40.50.100">
    <property type="match status" value="1"/>
</dbReference>
<dbReference type="HAMAP" id="MF_00272">
    <property type="entry name" value="GcvH"/>
    <property type="match status" value="1"/>
</dbReference>
<dbReference type="InterPro" id="IPR003016">
    <property type="entry name" value="2-oxoA_DH_lipoyl-BS"/>
</dbReference>
<dbReference type="InterPro" id="IPR000089">
    <property type="entry name" value="Biotin_lipoyl"/>
</dbReference>
<dbReference type="InterPro" id="IPR002930">
    <property type="entry name" value="GCV_H"/>
</dbReference>
<dbReference type="InterPro" id="IPR033753">
    <property type="entry name" value="GCV_H/Fam206"/>
</dbReference>
<dbReference type="InterPro" id="IPR017453">
    <property type="entry name" value="GCV_H_sub"/>
</dbReference>
<dbReference type="InterPro" id="IPR011053">
    <property type="entry name" value="Single_hybrid_motif"/>
</dbReference>
<dbReference type="NCBIfam" id="TIGR00527">
    <property type="entry name" value="gcvH"/>
    <property type="match status" value="1"/>
</dbReference>
<dbReference type="NCBIfam" id="NF002270">
    <property type="entry name" value="PRK01202.1"/>
    <property type="match status" value="1"/>
</dbReference>
<dbReference type="PANTHER" id="PTHR11715">
    <property type="entry name" value="GLYCINE CLEAVAGE SYSTEM H PROTEIN"/>
    <property type="match status" value="1"/>
</dbReference>
<dbReference type="PANTHER" id="PTHR11715:SF3">
    <property type="entry name" value="GLYCINE CLEAVAGE SYSTEM H PROTEIN-RELATED"/>
    <property type="match status" value="1"/>
</dbReference>
<dbReference type="Pfam" id="PF01597">
    <property type="entry name" value="GCV_H"/>
    <property type="match status" value="1"/>
</dbReference>
<dbReference type="SUPFAM" id="SSF51230">
    <property type="entry name" value="Single hybrid motif"/>
    <property type="match status" value="1"/>
</dbReference>
<dbReference type="PROSITE" id="PS50968">
    <property type="entry name" value="BIOTINYL_LIPOYL"/>
    <property type="match status" value="1"/>
</dbReference>
<dbReference type="PROSITE" id="PS00189">
    <property type="entry name" value="LIPOYL"/>
    <property type="match status" value="1"/>
</dbReference>
<keyword id="KW-0450">Lipoyl</keyword>
<organism>
    <name type="scientific">Bacillus cereus (strain ZK / E33L)</name>
    <dbReference type="NCBI Taxonomy" id="288681"/>
    <lineage>
        <taxon>Bacteria</taxon>
        <taxon>Bacillati</taxon>
        <taxon>Bacillota</taxon>
        <taxon>Bacilli</taxon>
        <taxon>Bacillales</taxon>
        <taxon>Bacillaceae</taxon>
        <taxon>Bacillus</taxon>
        <taxon>Bacillus cereus group</taxon>
    </lineage>
</organism>
<comment type="function">
    <text evidence="1">The glycine cleavage system catalyzes the degradation of glycine. The H protein shuttles the methylamine group of glycine from the P protein to the T protein.</text>
</comment>
<comment type="function">
    <text evidence="1">Is also involved in protein lipoylation via its role as an octanoyl/lipoyl carrier protein intermediate.</text>
</comment>
<comment type="cofactor">
    <cofactor evidence="1">
        <name>(R)-lipoate</name>
        <dbReference type="ChEBI" id="CHEBI:83088"/>
    </cofactor>
    <text evidence="1">Binds 1 lipoyl cofactor covalently.</text>
</comment>
<comment type="subunit">
    <text evidence="1">The glycine cleavage system is composed of four proteins: P, T, L and H.</text>
</comment>
<comment type="similarity">
    <text evidence="1">Belongs to the GcvH family.</text>
</comment>
<feature type="chain" id="PRO_0000302348" description="Glycine cleavage system H protein">
    <location>
        <begin position="1"/>
        <end position="127"/>
    </location>
</feature>
<feature type="domain" description="Lipoyl-binding" evidence="2">
    <location>
        <begin position="22"/>
        <end position="104"/>
    </location>
</feature>
<feature type="modified residue" description="N6-lipoyllysine" evidence="1">
    <location>
        <position position="63"/>
    </location>
</feature>